<evidence type="ECO:0000250" key="1"/>
<evidence type="ECO:0000256" key="2">
    <source>
        <dbReference type="SAM" id="MobiDB-lite"/>
    </source>
</evidence>
<evidence type="ECO:0000305" key="3"/>
<feature type="chain" id="PRO_0000409497" description="Intraflagellar transport protein 43 homolog A">
    <location>
        <begin position="1"/>
        <end position="207"/>
    </location>
</feature>
<feature type="region of interest" description="Disordered" evidence="2">
    <location>
        <begin position="1"/>
        <end position="104"/>
    </location>
</feature>
<accession>B5XBI1</accession>
<keyword id="KW-0970">Cilium biogenesis/degradation</keyword>
<keyword id="KW-1185">Reference proteome</keyword>
<sequence length="207" mass="23140">MDDNLQLGDSGVVKNVAKLGRRARLAAEQTSSLEESRHVRKSSSSTSMGEVPPPKPARRQGGWAEETSGSAKSGRRPAVVEDVEDRRLRPQTPQGSDDEGDIPVIPDLDEVQEEDLTMQVAAPPSIQVNRVMTYRDLDNDLMKYSAFQTLDGEIDLKLLTKVLAPEQEVREEDVGWDWDRLFTEVSSELLTEWDQGEKEEQVPLPVL</sequence>
<reference key="1">
    <citation type="journal article" date="2010" name="BMC Genomics">
        <title>Salmo salar and Esox lucius full-length cDNA sequences reveal changes in evolutionary pressures on a post-tetraploidization genome.</title>
        <authorList>
            <person name="Leong J.S."/>
            <person name="Jantzen S.G."/>
            <person name="von Schalburg K.R."/>
            <person name="Cooper G.A."/>
            <person name="Messmer A.M."/>
            <person name="Liao N.Y."/>
            <person name="Munro S."/>
            <person name="Moore R."/>
            <person name="Holt R.A."/>
            <person name="Jones S.J."/>
            <person name="Davidson W.S."/>
            <person name="Koop B.F."/>
        </authorList>
    </citation>
    <scope>NUCLEOTIDE SEQUENCE [LARGE SCALE MRNA]</scope>
</reference>
<dbReference type="EMBL" id="BT048400">
    <property type="protein sequence ID" value="ACI68201.1"/>
    <property type="molecule type" value="mRNA"/>
</dbReference>
<dbReference type="SMR" id="B5XBI1"/>
<dbReference type="Ensembl" id="ENSSSAT00020100776">
    <property type="protein sequence ID" value="ENSSSAP00020072739"/>
    <property type="gene ID" value="ENSSSAG00020048084"/>
</dbReference>
<dbReference type="Ensembl" id="ENSSSAT00070054889">
    <property type="protein sequence ID" value="ENSSSAP00070052690"/>
    <property type="gene ID" value="ENSSSAG00070034233"/>
</dbReference>
<dbReference type="Ensembl" id="ENSSSAT00075138431">
    <property type="protein sequence ID" value="ENSSSAP00075102185"/>
    <property type="gene ID" value="ENSSSAG00075065635"/>
</dbReference>
<dbReference type="GeneID" id="106611048"/>
<dbReference type="KEGG" id="sasa:106611048"/>
<dbReference type="Proteomes" id="UP000087266">
    <property type="component" value="Chromosome ssa09"/>
</dbReference>
<dbReference type="Bgee" id="ENSSSAG00000055332">
    <property type="expression patterns" value="Expressed in semen and 25 other cell types or tissues"/>
</dbReference>
<dbReference type="GO" id="GO:0005929">
    <property type="term" value="C:cilium"/>
    <property type="evidence" value="ECO:0007669"/>
    <property type="project" value="TreeGrafter"/>
</dbReference>
<dbReference type="GO" id="GO:0030991">
    <property type="term" value="C:intraciliary transport particle A"/>
    <property type="evidence" value="ECO:0007669"/>
    <property type="project" value="InterPro"/>
</dbReference>
<dbReference type="GO" id="GO:0060271">
    <property type="term" value="P:cilium assembly"/>
    <property type="evidence" value="ECO:0000250"/>
    <property type="project" value="UniProtKB"/>
</dbReference>
<dbReference type="GO" id="GO:0035721">
    <property type="term" value="P:intraciliary retrograde transport"/>
    <property type="evidence" value="ECO:0000250"/>
    <property type="project" value="UniProtKB"/>
</dbReference>
<dbReference type="InterPro" id="IPR029302">
    <property type="entry name" value="IFT43"/>
</dbReference>
<dbReference type="PANTHER" id="PTHR33724">
    <property type="entry name" value="INTRAFLAGELLAR TRANSPORT PROTEIN 43 HOMOLOG"/>
    <property type="match status" value="1"/>
</dbReference>
<dbReference type="PANTHER" id="PTHR33724:SF1">
    <property type="entry name" value="INTRAFLAGELLAR TRANSPORT PROTEIN 43 HOMOLOG"/>
    <property type="match status" value="1"/>
</dbReference>
<dbReference type="Pfam" id="PF15305">
    <property type="entry name" value="IFT43"/>
    <property type="match status" value="1"/>
</dbReference>
<proteinExistence type="evidence at transcript level"/>
<comment type="function">
    <text evidence="1">Component of IFT complex A (IFT-A) involved in retrograde ciliary transport along microtubules from the ciliary tip to the base.</text>
</comment>
<comment type="subunit">
    <text evidence="1">Component of IFT complex A.</text>
</comment>
<comment type="similarity">
    <text evidence="3">Belongs to the IFT43 family.</text>
</comment>
<protein>
    <recommendedName>
        <fullName>Intraflagellar transport protein 43 homolog A</fullName>
    </recommendedName>
</protein>
<name>IF43A_SALSA</name>
<gene>
    <name type="primary">ift43a</name>
</gene>
<organism>
    <name type="scientific">Salmo salar</name>
    <name type="common">Atlantic salmon</name>
    <dbReference type="NCBI Taxonomy" id="8030"/>
    <lineage>
        <taxon>Eukaryota</taxon>
        <taxon>Metazoa</taxon>
        <taxon>Chordata</taxon>
        <taxon>Craniata</taxon>
        <taxon>Vertebrata</taxon>
        <taxon>Euteleostomi</taxon>
        <taxon>Actinopterygii</taxon>
        <taxon>Neopterygii</taxon>
        <taxon>Teleostei</taxon>
        <taxon>Protacanthopterygii</taxon>
        <taxon>Salmoniformes</taxon>
        <taxon>Salmonidae</taxon>
        <taxon>Salmoninae</taxon>
        <taxon>Salmo</taxon>
    </lineage>
</organism>